<organism>
    <name type="scientific">Candida albicans (strain SC5314 / ATCC MYA-2876)</name>
    <name type="common">Yeast</name>
    <dbReference type="NCBI Taxonomy" id="237561"/>
    <lineage>
        <taxon>Eukaryota</taxon>
        <taxon>Fungi</taxon>
        <taxon>Dikarya</taxon>
        <taxon>Ascomycota</taxon>
        <taxon>Saccharomycotina</taxon>
        <taxon>Pichiomycetes</taxon>
        <taxon>Debaryomycetaceae</taxon>
        <taxon>Candida/Lodderomyces clade</taxon>
        <taxon>Candida</taxon>
    </lineage>
</organism>
<protein>
    <recommendedName>
        <fullName evidence="5">Small ribosomal subunit protein uS5</fullName>
    </recommendedName>
    <alternativeName>
        <fullName evidence="5">40S ribosomal protein S2</fullName>
    </alternativeName>
</protein>
<accession>Q5A900</accession>
<reference key="1">
    <citation type="journal article" date="2004" name="Proc. Natl. Acad. Sci. U.S.A.">
        <title>The diploid genome sequence of Candida albicans.</title>
        <authorList>
            <person name="Jones T."/>
            <person name="Federspiel N.A."/>
            <person name="Chibana H."/>
            <person name="Dungan J."/>
            <person name="Kalman S."/>
            <person name="Magee B.B."/>
            <person name="Newport G."/>
            <person name="Thorstenson Y.R."/>
            <person name="Agabian N."/>
            <person name="Magee P.T."/>
            <person name="Davis R.W."/>
            <person name="Scherer S."/>
        </authorList>
    </citation>
    <scope>NUCLEOTIDE SEQUENCE [LARGE SCALE GENOMIC DNA]</scope>
    <source>
        <strain>SC5314 / ATCC MYA-2876</strain>
    </source>
</reference>
<reference key="2">
    <citation type="journal article" date="2007" name="Genome Biol.">
        <title>Assembly of the Candida albicans genome into sixteen supercontigs aligned on the eight chromosomes.</title>
        <authorList>
            <person name="van het Hoog M."/>
            <person name="Rast T.J."/>
            <person name="Martchenko M."/>
            <person name="Grindle S."/>
            <person name="Dignard D."/>
            <person name="Hogues H."/>
            <person name="Cuomo C."/>
            <person name="Berriman M."/>
            <person name="Scherer S."/>
            <person name="Magee B.B."/>
            <person name="Whiteway M."/>
            <person name="Chibana H."/>
            <person name="Nantel A."/>
            <person name="Magee P.T."/>
        </authorList>
    </citation>
    <scope>GENOME REANNOTATION</scope>
    <source>
        <strain>SC5314 / ATCC MYA-2876</strain>
    </source>
</reference>
<reference key="3">
    <citation type="journal article" date="2013" name="Genome Biol.">
        <title>Assembly of a phased diploid Candida albicans genome facilitates allele-specific measurements and provides a simple model for repeat and indel structure.</title>
        <authorList>
            <person name="Muzzey D."/>
            <person name="Schwartz K."/>
            <person name="Weissman J.S."/>
            <person name="Sherlock G."/>
        </authorList>
    </citation>
    <scope>NUCLEOTIDE SEQUENCE [LARGE SCALE GENOMIC DNA]</scope>
    <scope>GENOME REANNOTATION</scope>
    <source>
        <strain>SC5314 / ATCC MYA-2876</strain>
    </source>
</reference>
<reference evidence="8 9 10" key="4">
    <citation type="journal article" date="2022" name="Sci. Adv.">
        <title>E-site drug specificity of the human pathogen Candida albicans ribosome.</title>
        <authorList>
            <person name="Zgadzay Y."/>
            <person name="Kolosova O."/>
            <person name="Stetsenko A."/>
            <person name="Wu C."/>
            <person name="Bruchlen D."/>
            <person name="Usachev K."/>
            <person name="Validov S."/>
            <person name="Jenner L."/>
            <person name="Rogachev A."/>
            <person name="Yusupova G."/>
            <person name="Sachs M.S."/>
            <person name="Guskov A."/>
            <person name="Yusupov M."/>
        </authorList>
    </citation>
    <scope>STRUCTURE BY ELECTRON MICROSCOPY (2.32 ANGSTROMS) OF THE 80S RIBOSOME</scope>
    <scope>SUBUNIT</scope>
</reference>
<feature type="chain" id="PRO_0000456540" description="Small ribosomal subunit protein uS5">
    <location>
        <begin position="1"/>
        <end position="249"/>
    </location>
</feature>
<feature type="domain" description="S5 DRBM" evidence="2">
    <location>
        <begin position="71"/>
        <end position="134"/>
    </location>
</feature>
<feature type="region of interest" description="Disordered" evidence="3">
    <location>
        <begin position="1"/>
        <end position="29"/>
    </location>
</feature>
<feature type="compositionally biased region" description="Basic and acidic residues" evidence="3">
    <location>
        <begin position="1"/>
        <end position="14"/>
    </location>
</feature>
<name>RS2_CANAL</name>
<gene>
    <name type="primary">RPS21</name>
    <name type="synonym">RPS2</name>
    <name type="ordered locus">orf19.3334</name>
    <name type="ORF">CAALFM_C101480CA</name>
</gene>
<evidence type="ECO:0000250" key="1">
    <source>
        <dbReference type="UniProtKB" id="P25443"/>
    </source>
</evidence>
<evidence type="ECO:0000255" key="2">
    <source>
        <dbReference type="PROSITE-ProRule" id="PRU00268"/>
    </source>
</evidence>
<evidence type="ECO:0000256" key="3">
    <source>
        <dbReference type="SAM" id="MobiDB-lite"/>
    </source>
</evidence>
<evidence type="ECO:0000269" key="4">
    <source>
    </source>
</evidence>
<evidence type="ECO:0000303" key="5">
    <source>
    </source>
</evidence>
<evidence type="ECO:0000305" key="6"/>
<evidence type="ECO:0000305" key="7">
    <source>
    </source>
</evidence>
<evidence type="ECO:0007744" key="8">
    <source>
        <dbReference type="PDB" id="7PZY"/>
    </source>
</evidence>
<evidence type="ECO:0007744" key="9">
    <source>
        <dbReference type="PDB" id="7Q0F"/>
    </source>
</evidence>
<evidence type="ECO:0007744" key="10">
    <source>
        <dbReference type="PDB" id="7Q0P"/>
    </source>
</evidence>
<comment type="function">
    <text evidence="1 7">Component of the ribosome, a large ribonucleoprotein complex responsible for the synthesis of proteins in the cell. The small ribosomal subunit (SSU) binds messenger RNAs (mRNAs) and translates the encoded message by selecting cognate aminoacyl-transfer RNA (tRNA) molecules. The large subunit (LSU) contains the ribosomal catalytic site termed the peptidyl transferase center (PTC), which catalyzes the formation of peptide bonds, thereby polymerizing the amino acids delivered by tRNAs into a polypeptide chain. The nascent polypeptides leave the ribosome through a tunnel in the LSU and interact with protein factors that function in enzymatic processing, targeting, and the membrane insertion of nascent chains at the exit of the ribosomal tunnel (Probable). RPS2 is important for the assembly and function of the 40S ribosomal subunitand is nvolved in nucleolar processing of pre-18S ribosomal RNA and ribosome assembly (By similarity).</text>
</comment>
<comment type="subunit">
    <text evidence="4">Component of the small ribosomal subunit (PubMed:35613268). Mature ribosomes consist of a small (40S) and a large (60S) subunit (PubMed:35613268). The 40S subunit contains about 32 different proteins and 1 molecule of RNA (18S) (PubMed:35613268). The 60S subunit contains 45 different proteins and 3 molecules of RNA (25S, 5.8S and 5S) (PubMed:35613268).</text>
</comment>
<comment type="subcellular location">
    <subcellularLocation>
        <location evidence="7">Cytoplasm</location>
    </subcellularLocation>
</comment>
<comment type="similarity">
    <text evidence="6">Belongs to the universal ribosomal protein uS5 family.</text>
</comment>
<sequence>MSAEAPKRQFGDRRRGGRRGGRRDGEEKGWTPVTKLGRLVKAGKITSVEQIYLHSLPVKEYQIIDLLLPDLKDDVMKIRSVQKQTRAGQRTRMKAVVVIGDSNGHVGLGIKTAKEVASAIKAAIVIAKLSIIPIRRGYWGSNLGQPHSLPCKVTGKCGSVAVRLIPAPRGKGIVASPVVKRLMQLAGVEDVYTSSSGSTRTTENTLKAAFAAIGNTYSFLTPNLWAETPLAASPLEVYAEEAAAGKKRY</sequence>
<dbReference type="EMBL" id="CP017623">
    <property type="protein sequence ID" value="AOW25839.1"/>
    <property type="molecule type" value="Genomic_DNA"/>
</dbReference>
<dbReference type="RefSeq" id="XP_718157.1">
    <property type="nucleotide sequence ID" value="XM_713064.2"/>
</dbReference>
<dbReference type="PDB" id="7PZY">
    <property type="method" value="EM"/>
    <property type="resolution" value="2.32 A"/>
    <property type="chains" value="D=1-249"/>
</dbReference>
<dbReference type="PDB" id="7Q08">
    <property type="method" value="EM"/>
    <property type="resolution" value="2.56 A"/>
    <property type="chains" value="D=1-249"/>
</dbReference>
<dbReference type="PDB" id="7Q0F">
    <property type="method" value="EM"/>
    <property type="resolution" value="2.64 A"/>
    <property type="chains" value="D=1-249"/>
</dbReference>
<dbReference type="PDB" id="7Q0P">
    <property type="method" value="EM"/>
    <property type="resolution" value="2.77 A"/>
    <property type="chains" value="D=1-249"/>
</dbReference>
<dbReference type="PDB" id="7Q0R">
    <property type="method" value="EM"/>
    <property type="resolution" value="2.67 A"/>
    <property type="chains" value="D=1-249"/>
</dbReference>
<dbReference type="PDB" id="8C3A">
    <property type="method" value="X-ray"/>
    <property type="resolution" value="3.00 A"/>
    <property type="chains" value="CP/E=1-249"/>
</dbReference>
<dbReference type="PDB" id="8OGJ">
    <property type="method" value="EM"/>
    <property type="resolution" value="3.10 A"/>
    <property type="chains" value="D=1-249"/>
</dbReference>
<dbReference type="PDB" id="8OH6">
    <property type="method" value="X-ray"/>
    <property type="resolution" value="3.35 A"/>
    <property type="chains" value="CP/E=1-249"/>
</dbReference>
<dbReference type="PDB" id="8OI5">
    <property type="method" value="X-ray"/>
    <property type="resolution" value="2.90 A"/>
    <property type="chains" value="CP/E=1-249"/>
</dbReference>
<dbReference type="PDB" id="8OJ3">
    <property type="method" value="X-ray"/>
    <property type="resolution" value="3.50 A"/>
    <property type="chains" value="CP/E=1-249"/>
</dbReference>
<dbReference type="PDBsum" id="7PZY"/>
<dbReference type="PDBsum" id="7Q08"/>
<dbReference type="PDBsum" id="7Q0F"/>
<dbReference type="PDBsum" id="7Q0P"/>
<dbReference type="PDBsum" id="7Q0R"/>
<dbReference type="PDBsum" id="8C3A"/>
<dbReference type="PDBsum" id="8OGJ"/>
<dbReference type="PDBsum" id="8OH6"/>
<dbReference type="PDBsum" id="8OI5"/>
<dbReference type="PDBsum" id="8OJ3"/>
<dbReference type="EMDB" id="EMD-13737"/>
<dbReference type="EMDB" id="EMD-13741"/>
<dbReference type="EMDB" id="EMD-13744"/>
<dbReference type="EMDB" id="EMD-13749"/>
<dbReference type="EMDB" id="EMD-13750"/>
<dbReference type="SMR" id="Q5A900"/>
<dbReference type="FunCoup" id="Q5A900">
    <property type="interactions" value="914"/>
</dbReference>
<dbReference type="STRING" id="237561.Q5A900"/>
<dbReference type="EnsemblFungi" id="C1_01480C_A-T">
    <property type="protein sequence ID" value="C1_01480C_A-T-p1"/>
    <property type="gene ID" value="C1_01480C_A"/>
</dbReference>
<dbReference type="GeneID" id="3640242"/>
<dbReference type="KEGG" id="cal:CAALFM_C101480CA"/>
<dbReference type="CGD" id="CAL0000191073">
    <property type="gene designation" value="RPS21"/>
</dbReference>
<dbReference type="VEuPathDB" id="FungiDB:C1_01480C_A"/>
<dbReference type="eggNOG" id="KOG0877">
    <property type="taxonomic scope" value="Eukaryota"/>
</dbReference>
<dbReference type="HOGENOM" id="CLU_065898_0_2_1"/>
<dbReference type="InParanoid" id="Q5A900"/>
<dbReference type="OMA" id="PYEEWSD"/>
<dbReference type="OrthoDB" id="10253125at2759"/>
<dbReference type="Proteomes" id="UP000000559">
    <property type="component" value="Chromosome 1"/>
</dbReference>
<dbReference type="GO" id="GO:0022627">
    <property type="term" value="C:cytosolic small ribosomal subunit"/>
    <property type="evidence" value="ECO:0000318"/>
    <property type="project" value="GO_Central"/>
</dbReference>
<dbReference type="GO" id="GO:0032040">
    <property type="term" value="C:small-subunit processome"/>
    <property type="evidence" value="ECO:0007669"/>
    <property type="project" value="EnsemblFungi"/>
</dbReference>
<dbReference type="GO" id="GO:0070181">
    <property type="term" value="F:small ribosomal subunit rRNA binding"/>
    <property type="evidence" value="ECO:0007669"/>
    <property type="project" value="EnsemblFungi"/>
</dbReference>
<dbReference type="GO" id="GO:0003735">
    <property type="term" value="F:structural constituent of ribosome"/>
    <property type="evidence" value="ECO:0000318"/>
    <property type="project" value="GO_Central"/>
</dbReference>
<dbReference type="GO" id="GO:0045903">
    <property type="term" value="P:positive regulation of translational fidelity"/>
    <property type="evidence" value="ECO:0007669"/>
    <property type="project" value="EnsemblFungi"/>
</dbReference>
<dbReference type="GO" id="GO:0000054">
    <property type="term" value="P:ribosomal subunit export from nucleus"/>
    <property type="evidence" value="ECO:0007669"/>
    <property type="project" value="EnsemblFungi"/>
</dbReference>
<dbReference type="GO" id="GO:0006412">
    <property type="term" value="P:translation"/>
    <property type="evidence" value="ECO:0000318"/>
    <property type="project" value="GO_Central"/>
</dbReference>
<dbReference type="FunFam" id="3.30.160.20:FF:000002">
    <property type="entry name" value="40S ribosomal protein S2"/>
    <property type="match status" value="1"/>
</dbReference>
<dbReference type="FunFam" id="3.30.230.10:FF:000004">
    <property type="entry name" value="40S ribosomal protein S2"/>
    <property type="match status" value="1"/>
</dbReference>
<dbReference type="Gene3D" id="3.30.160.20">
    <property type="match status" value="1"/>
</dbReference>
<dbReference type="Gene3D" id="3.30.230.10">
    <property type="match status" value="1"/>
</dbReference>
<dbReference type="InterPro" id="IPR020568">
    <property type="entry name" value="Ribosomal_Su5_D2-typ_SF"/>
</dbReference>
<dbReference type="InterPro" id="IPR000851">
    <property type="entry name" value="Ribosomal_uS5"/>
</dbReference>
<dbReference type="InterPro" id="IPR005324">
    <property type="entry name" value="Ribosomal_uS5_C"/>
</dbReference>
<dbReference type="InterPro" id="IPR005711">
    <property type="entry name" value="Ribosomal_uS5_euk/arc"/>
</dbReference>
<dbReference type="InterPro" id="IPR013810">
    <property type="entry name" value="Ribosomal_uS5_N"/>
</dbReference>
<dbReference type="InterPro" id="IPR018192">
    <property type="entry name" value="Ribosomal_uS5_N_CS"/>
</dbReference>
<dbReference type="InterPro" id="IPR014721">
    <property type="entry name" value="Ribsml_uS5_D2-typ_fold_subgr"/>
</dbReference>
<dbReference type="NCBIfam" id="TIGR01020">
    <property type="entry name" value="uS5_euk_arch"/>
    <property type="match status" value="1"/>
</dbReference>
<dbReference type="PANTHER" id="PTHR13718:SF4">
    <property type="entry name" value="40S RIBOSOMAL PROTEIN S2"/>
    <property type="match status" value="1"/>
</dbReference>
<dbReference type="PANTHER" id="PTHR13718">
    <property type="entry name" value="RIBOSOMAL S SUBUNIT"/>
    <property type="match status" value="1"/>
</dbReference>
<dbReference type="Pfam" id="PF00333">
    <property type="entry name" value="Ribosomal_S5"/>
    <property type="match status" value="1"/>
</dbReference>
<dbReference type="Pfam" id="PF03719">
    <property type="entry name" value="Ribosomal_S5_C"/>
    <property type="match status" value="1"/>
</dbReference>
<dbReference type="SUPFAM" id="SSF54768">
    <property type="entry name" value="dsRNA-binding domain-like"/>
    <property type="match status" value="1"/>
</dbReference>
<dbReference type="SUPFAM" id="SSF54211">
    <property type="entry name" value="Ribosomal protein S5 domain 2-like"/>
    <property type="match status" value="1"/>
</dbReference>
<dbReference type="PROSITE" id="PS00585">
    <property type="entry name" value="RIBOSOMAL_S5"/>
    <property type="match status" value="1"/>
</dbReference>
<dbReference type="PROSITE" id="PS50881">
    <property type="entry name" value="S5_DSRBD"/>
    <property type="match status" value="1"/>
</dbReference>
<proteinExistence type="evidence at protein level"/>
<keyword id="KW-0002">3D-structure</keyword>
<keyword id="KW-0963">Cytoplasm</keyword>
<keyword id="KW-1185">Reference proteome</keyword>
<keyword id="KW-0687">Ribonucleoprotein</keyword>
<keyword id="KW-0689">Ribosomal protein</keyword>